<evidence type="ECO:0000255" key="1">
    <source>
        <dbReference type="HAMAP-Rule" id="MF_00204"/>
    </source>
</evidence>
<organism>
    <name type="scientific">Gloeobacter violaceus (strain ATCC 29082 / PCC 7421)</name>
    <dbReference type="NCBI Taxonomy" id="251221"/>
    <lineage>
        <taxon>Bacteria</taxon>
        <taxon>Bacillati</taxon>
        <taxon>Cyanobacteriota</taxon>
        <taxon>Cyanophyceae</taxon>
        <taxon>Gloeobacterales</taxon>
        <taxon>Gloeobacteraceae</taxon>
        <taxon>Gloeobacter</taxon>
    </lineage>
</organism>
<reference key="1">
    <citation type="journal article" date="2003" name="DNA Res.">
        <title>Complete genome structure of Gloeobacter violaceus PCC 7421, a cyanobacterium that lacks thylakoids.</title>
        <authorList>
            <person name="Nakamura Y."/>
            <person name="Kaneko T."/>
            <person name="Sato S."/>
            <person name="Mimuro M."/>
            <person name="Miyashita H."/>
            <person name="Tsuchiya T."/>
            <person name="Sasamoto S."/>
            <person name="Watanabe A."/>
            <person name="Kawashima K."/>
            <person name="Kishida Y."/>
            <person name="Kiyokawa C."/>
            <person name="Kohara M."/>
            <person name="Matsumoto M."/>
            <person name="Matsuno A."/>
            <person name="Nakazaki N."/>
            <person name="Shimpo S."/>
            <person name="Takeuchi C."/>
            <person name="Yamada M."/>
            <person name="Tabata S."/>
        </authorList>
    </citation>
    <scope>NUCLEOTIDE SEQUENCE [LARGE SCALE GENOMIC DNA]</scope>
    <source>
        <strain>ATCC 29082 / PCC 7421</strain>
    </source>
</reference>
<accession>Q7NJH7</accession>
<protein>
    <recommendedName>
        <fullName evidence="1">UvrABC system protein B</fullName>
        <shortName evidence="1">Protein UvrB</shortName>
    </recommendedName>
    <alternativeName>
        <fullName evidence="1">Excinuclease ABC subunit B</fullName>
    </alternativeName>
</protein>
<gene>
    <name evidence="1" type="primary">uvrB</name>
    <name type="ordered locus">gll1855</name>
</gene>
<keyword id="KW-0067">ATP-binding</keyword>
<keyword id="KW-0963">Cytoplasm</keyword>
<keyword id="KW-0227">DNA damage</keyword>
<keyword id="KW-0228">DNA excision</keyword>
<keyword id="KW-0234">DNA repair</keyword>
<keyword id="KW-0267">Excision nuclease</keyword>
<keyword id="KW-0547">Nucleotide-binding</keyword>
<keyword id="KW-1185">Reference proteome</keyword>
<keyword id="KW-0742">SOS response</keyword>
<sequence length="680" mass="76909">MTDDRFVVSAPYRPTGDQPRAIAQLSAGALGGVTFQTLLGATGTGKTFTIANVIEKVGKPTLVLAHNKTLAAQLCNELREFFPDNAVEYFVSYYDYYQPEAYIPQTDTYIEKSASINDEIDMLRHSATRSLFERRDVIVVASVSCIYGLGMPEEYLRAAIPLKVGSNIDQRELLRQLVTVQYERNDIDLGRGRFRVRGDVVEIGPAYEDRIIRVEFFGDEVEAVRWLDPVTGEVVRSVNSLNIYPAKHFVTPEEQLEQACIAIEQELEARVAELEGENKLLEAQRIKQRTRYDLEMLREVGYCNGVENYSRHLAARRPGEAPSCLIDYFPQDWLLVVDESHVTIPQIRGMYNGDAQRKKVLIDHGFRLPSAADNRPLKAPEFWDKVRQAIFVSATPGDWEVELSGGGRDPETGRMAGEHVAEQIIRPTGVLDPEVFVRPVAGQVDDLLHEIHDRVARRERVLVTTLTKRMAEDLTEYFQERGVKVRYLHSEIQAIERIEILQALRQGDFDVLIGVNLLREGLDLPEVSLVAILDADKEGFLRAERSLIQTIGRAARHVRGQVIMYADRLTASMDKAISETERRRQIQRAYNAAHGLTPQPIVKRLDANSILDYLAVSRRLNQQELEAAAAAPAEVALADIPELVSQLEIQMRDAAKKLEFEKAAEYRDKIHKLRERLLGK</sequence>
<proteinExistence type="inferred from homology"/>
<name>UVRB_GLOVI</name>
<comment type="function">
    <text evidence="1">The UvrABC repair system catalyzes the recognition and processing of DNA lesions. A damage recognition complex composed of 2 UvrA and 2 UvrB subunits scans DNA for abnormalities. Upon binding of the UvrA(2)B(2) complex to a putative damaged site, the DNA wraps around one UvrB monomer. DNA wrap is dependent on ATP binding by UvrB and probably causes local melting of the DNA helix, facilitating insertion of UvrB beta-hairpin between the DNA strands. Then UvrB probes one DNA strand for the presence of a lesion. If a lesion is found the UvrA subunits dissociate and the UvrB-DNA preincision complex is formed. This complex is subsequently bound by UvrC and the second UvrB is released. If no lesion is found, the DNA wraps around the other UvrB subunit that will check the other stand for damage.</text>
</comment>
<comment type="subunit">
    <text evidence="1">Forms a heterotetramer with UvrA during the search for lesions. Interacts with UvrC in an incision complex.</text>
</comment>
<comment type="subcellular location">
    <subcellularLocation>
        <location evidence="1">Cytoplasm</location>
    </subcellularLocation>
</comment>
<comment type="domain">
    <text evidence="1">The beta-hairpin motif is involved in DNA binding.</text>
</comment>
<comment type="similarity">
    <text evidence="1">Belongs to the UvrB family.</text>
</comment>
<dbReference type="EMBL" id="BA000045">
    <property type="protein sequence ID" value="BAC89796.1"/>
    <property type="molecule type" value="Genomic_DNA"/>
</dbReference>
<dbReference type="RefSeq" id="NP_924801.1">
    <property type="nucleotide sequence ID" value="NC_005125.1"/>
</dbReference>
<dbReference type="RefSeq" id="WP_011141853.1">
    <property type="nucleotide sequence ID" value="NC_005125.1"/>
</dbReference>
<dbReference type="SMR" id="Q7NJH7"/>
<dbReference type="FunCoup" id="Q7NJH7">
    <property type="interactions" value="7"/>
</dbReference>
<dbReference type="STRING" id="251221.gene:10759347"/>
<dbReference type="EnsemblBacteria" id="BAC89796">
    <property type="protein sequence ID" value="BAC89796"/>
    <property type="gene ID" value="BAC89796"/>
</dbReference>
<dbReference type="KEGG" id="gvi:gll1855"/>
<dbReference type="PATRIC" id="fig|251221.4.peg.1887"/>
<dbReference type="eggNOG" id="COG0556">
    <property type="taxonomic scope" value="Bacteria"/>
</dbReference>
<dbReference type="HOGENOM" id="CLU_009621_2_1_3"/>
<dbReference type="InParanoid" id="Q7NJH7"/>
<dbReference type="OrthoDB" id="9806651at2"/>
<dbReference type="PhylomeDB" id="Q7NJH7"/>
<dbReference type="Proteomes" id="UP000000557">
    <property type="component" value="Chromosome"/>
</dbReference>
<dbReference type="GO" id="GO:0005737">
    <property type="term" value="C:cytoplasm"/>
    <property type="evidence" value="ECO:0007669"/>
    <property type="project" value="UniProtKB-SubCell"/>
</dbReference>
<dbReference type="GO" id="GO:0009380">
    <property type="term" value="C:excinuclease repair complex"/>
    <property type="evidence" value="ECO:0000318"/>
    <property type="project" value="GO_Central"/>
</dbReference>
<dbReference type="GO" id="GO:0005524">
    <property type="term" value="F:ATP binding"/>
    <property type="evidence" value="ECO:0007669"/>
    <property type="project" value="UniProtKB-UniRule"/>
</dbReference>
<dbReference type="GO" id="GO:0016887">
    <property type="term" value="F:ATP hydrolysis activity"/>
    <property type="evidence" value="ECO:0007669"/>
    <property type="project" value="InterPro"/>
</dbReference>
<dbReference type="GO" id="GO:0003677">
    <property type="term" value="F:DNA binding"/>
    <property type="evidence" value="ECO:0007669"/>
    <property type="project" value="UniProtKB-UniRule"/>
</dbReference>
<dbReference type="GO" id="GO:0009381">
    <property type="term" value="F:excinuclease ABC activity"/>
    <property type="evidence" value="ECO:0007669"/>
    <property type="project" value="UniProtKB-UniRule"/>
</dbReference>
<dbReference type="GO" id="GO:0000715">
    <property type="term" value="P:nucleotide-excision repair, DNA damage recognition"/>
    <property type="evidence" value="ECO:0000318"/>
    <property type="project" value="GO_Central"/>
</dbReference>
<dbReference type="GO" id="GO:0009432">
    <property type="term" value="P:SOS response"/>
    <property type="evidence" value="ECO:0007669"/>
    <property type="project" value="UniProtKB-UniRule"/>
</dbReference>
<dbReference type="CDD" id="cd17916">
    <property type="entry name" value="DEXHc_UvrB"/>
    <property type="match status" value="1"/>
</dbReference>
<dbReference type="CDD" id="cd18790">
    <property type="entry name" value="SF2_C_UvrB"/>
    <property type="match status" value="1"/>
</dbReference>
<dbReference type="Gene3D" id="3.40.50.300">
    <property type="entry name" value="P-loop containing nucleotide triphosphate hydrolases"/>
    <property type="match status" value="3"/>
</dbReference>
<dbReference type="Gene3D" id="4.10.860.10">
    <property type="entry name" value="UVR domain"/>
    <property type="match status" value="1"/>
</dbReference>
<dbReference type="HAMAP" id="MF_00204">
    <property type="entry name" value="UvrB"/>
    <property type="match status" value="1"/>
</dbReference>
<dbReference type="InterPro" id="IPR006935">
    <property type="entry name" value="Helicase/UvrB_N"/>
</dbReference>
<dbReference type="InterPro" id="IPR014001">
    <property type="entry name" value="Helicase_ATP-bd"/>
</dbReference>
<dbReference type="InterPro" id="IPR001650">
    <property type="entry name" value="Helicase_C-like"/>
</dbReference>
<dbReference type="InterPro" id="IPR027417">
    <property type="entry name" value="P-loop_NTPase"/>
</dbReference>
<dbReference type="InterPro" id="IPR001943">
    <property type="entry name" value="UVR_dom"/>
</dbReference>
<dbReference type="InterPro" id="IPR036876">
    <property type="entry name" value="UVR_dom_sf"/>
</dbReference>
<dbReference type="InterPro" id="IPR004807">
    <property type="entry name" value="UvrB"/>
</dbReference>
<dbReference type="InterPro" id="IPR041471">
    <property type="entry name" value="UvrB_inter"/>
</dbReference>
<dbReference type="InterPro" id="IPR024759">
    <property type="entry name" value="UvrB_YAD/RRR_dom"/>
</dbReference>
<dbReference type="NCBIfam" id="NF003673">
    <property type="entry name" value="PRK05298.1"/>
    <property type="match status" value="1"/>
</dbReference>
<dbReference type="NCBIfam" id="TIGR00631">
    <property type="entry name" value="uvrb"/>
    <property type="match status" value="1"/>
</dbReference>
<dbReference type="PANTHER" id="PTHR24029">
    <property type="entry name" value="UVRABC SYSTEM PROTEIN B"/>
    <property type="match status" value="1"/>
</dbReference>
<dbReference type="PANTHER" id="PTHR24029:SF0">
    <property type="entry name" value="UVRABC SYSTEM PROTEIN B"/>
    <property type="match status" value="1"/>
</dbReference>
<dbReference type="Pfam" id="PF00271">
    <property type="entry name" value="Helicase_C"/>
    <property type="match status" value="1"/>
</dbReference>
<dbReference type="Pfam" id="PF04851">
    <property type="entry name" value="ResIII"/>
    <property type="match status" value="1"/>
</dbReference>
<dbReference type="Pfam" id="PF02151">
    <property type="entry name" value="UVR"/>
    <property type="match status" value="1"/>
</dbReference>
<dbReference type="Pfam" id="PF12344">
    <property type="entry name" value="UvrB"/>
    <property type="match status" value="1"/>
</dbReference>
<dbReference type="Pfam" id="PF17757">
    <property type="entry name" value="UvrB_inter"/>
    <property type="match status" value="1"/>
</dbReference>
<dbReference type="SMART" id="SM00487">
    <property type="entry name" value="DEXDc"/>
    <property type="match status" value="1"/>
</dbReference>
<dbReference type="SMART" id="SM00490">
    <property type="entry name" value="HELICc"/>
    <property type="match status" value="1"/>
</dbReference>
<dbReference type="SUPFAM" id="SSF46600">
    <property type="entry name" value="C-terminal UvrC-binding domain of UvrB"/>
    <property type="match status" value="1"/>
</dbReference>
<dbReference type="SUPFAM" id="SSF52540">
    <property type="entry name" value="P-loop containing nucleoside triphosphate hydrolases"/>
    <property type="match status" value="2"/>
</dbReference>
<dbReference type="PROSITE" id="PS51192">
    <property type="entry name" value="HELICASE_ATP_BIND_1"/>
    <property type="match status" value="1"/>
</dbReference>
<dbReference type="PROSITE" id="PS51194">
    <property type="entry name" value="HELICASE_CTER"/>
    <property type="match status" value="1"/>
</dbReference>
<dbReference type="PROSITE" id="PS50151">
    <property type="entry name" value="UVR"/>
    <property type="match status" value="1"/>
</dbReference>
<feature type="chain" id="PRO_0000227317" description="UvrABC system protein B">
    <location>
        <begin position="1"/>
        <end position="680"/>
    </location>
</feature>
<feature type="domain" description="Helicase ATP-binding" evidence="1">
    <location>
        <begin position="27"/>
        <end position="422"/>
    </location>
</feature>
<feature type="domain" description="Helicase C-terminal" evidence="1">
    <location>
        <begin position="443"/>
        <end position="609"/>
    </location>
</feature>
<feature type="domain" description="UVR" evidence="1">
    <location>
        <begin position="641"/>
        <end position="676"/>
    </location>
</feature>
<feature type="short sequence motif" description="Beta-hairpin">
    <location>
        <begin position="93"/>
        <end position="116"/>
    </location>
</feature>
<feature type="binding site" evidence="1">
    <location>
        <begin position="40"/>
        <end position="47"/>
    </location>
    <ligand>
        <name>ATP</name>
        <dbReference type="ChEBI" id="CHEBI:30616"/>
    </ligand>
</feature>